<sequence length="469" mass="51623">MAPQQTGSRKRKASEVEQGAGTSSLPGRAAAAAGTGQADGPLLLAKRPRRPVARRSLVHYLKGRALGADGHPGVAGFEGDLRSYGVLRLPELLRERQLTLGPLNKVFASQWLNARQVVCGTKCNTLFVVDVQTGRITRIPLMRDRGPGQTRAQPTCGIHAIQLNPSKTLLATGGENPNSLAVYQLPTLDPVCLGDRQGHRDWIFAIAWMSDTVAVSGSRDGTVALWRVDSDMFNGSIPWHNNSGIPRYSHIRPRDMEAIPRATTNPGNRKVRALAFSGRNQELGAVSLDGYFHLWKARSSLSRLLSLRLPYCRENVCLTYCDELSLYAVGSQSHVSFLDPRQRQQNIKPLCSREGGTGVRSLSFYQHIITVGTGHGSLLFYDIRAQKFLEERASASPDSFLGRTGRKLKLTCGRGWLNQDELWVNYFGGTEEFPNALYTHCYNWPEMKLFVGGGPLPSGLHGNYAGLWS</sequence>
<name>DC122_MOUSE</name>
<reference key="1">
    <citation type="journal article" date="2005" name="Science">
        <title>The transcriptional landscape of the mammalian genome.</title>
        <authorList>
            <person name="Carninci P."/>
            <person name="Kasukawa T."/>
            <person name="Katayama S."/>
            <person name="Gough J."/>
            <person name="Frith M.C."/>
            <person name="Maeda N."/>
            <person name="Oyama R."/>
            <person name="Ravasi T."/>
            <person name="Lenhard B."/>
            <person name="Wells C."/>
            <person name="Kodzius R."/>
            <person name="Shimokawa K."/>
            <person name="Bajic V.B."/>
            <person name="Brenner S.E."/>
            <person name="Batalov S."/>
            <person name="Forrest A.R."/>
            <person name="Zavolan M."/>
            <person name="Davis M.J."/>
            <person name="Wilming L.G."/>
            <person name="Aidinis V."/>
            <person name="Allen J.E."/>
            <person name="Ambesi-Impiombato A."/>
            <person name="Apweiler R."/>
            <person name="Aturaliya R.N."/>
            <person name="Bailey T.L."/>
            <person name="Bansal M."/>
            <person name="Baxter L."/>
            <person name="Beisel K.W."/>
            <person name="Bersano T."/>
            <person name="Bono H."/>
            <person name="Chalk A.M."/>
            <person name="Chiu K.P."/>
            <person name="Choudhary V."/>
            <person name="Christoffels A."/>
            <person name="Clutterbuck D.R."/>
            <person name="Crowe M.L."/>
            <person name="Dalla E."/>
            <person name="Dalrymple B.P."/>
            <person name="de Bono B."/>
            <person name="Della Gatta G."/>
            <person name="di Bernardo D."/>
            <person name="Down T."/>
            <person name="Engstrom P."/>
            <person name="Fagiolini M."/>
            <person name="Faulkner G."/>
            <person name="Fletcher C.F."/>
            <person name="Fukushima T."/>
            <person name="Furuno M."/>
            <person name="Futaki S."/>
            <person name="Gariboldi M."/>
            <person name="Georgii-Hemming P."/>
            <person name="Gingeras T.R."/>
            <person name="Gojobori T."/>
            <person name="Green R.E."/>
            <person name="Gustincich S."/>
            <person name="Harbers M."/>
            <person name="Hayashi Y."/>
            <person name="Hensch T.K."/>
            <person name="Hirokawa N."/>
            <person name="Hill D."/>
            <person name="Huminiecki L."/>
            <person name="Iacono M."/>
            <person name="Ikeo K."/>
            <person name="Iwama A."/>
            <person name="Ishikawa T."/>
            <person name="Jakt M."/>
            <person name="Kanapin A."/>
            <person name="Katoh M."/>
            <person name="Kawasawa Y."/>
            <person name="Kelso J."/>
            <person name="Kitamura H."/>
            <person name="Kitano H."/>
            <person name="Kollias G."/>
            <person name="Krishnan S.P."/>
            <person name="Kruger A."/>
            <person name="Kummerfeld S.K."/>
            <person name="Kurochkin I.V."/>
            <person name="Lareau L.F."/>
            <person name="Lazarevic D."/>
            <person name="Lipovich L."/>
            <person name="Liu J."/>
            <person name="Liuni S."/>
            <person name="McWilliam S."/>
            <person name="Madan Babu M."/>
            <person name="Madera M."/>
            <person name="Marchionni L."/>
            <person name="Matsuda H."/>
            <person name="Matsuzawa S."/>
            <person name="Miki H."/>
            <person name="Mignone F."/>
            <person name="Miyake S."/>
            <person name="Morris K."/>
            <person name="Mottagui-Tabar S."/>
            <person name="Mulder N."/>
            <person name="Nakano N."/>
            <person name="Nakauchi H."/>
            <person name="Ng P."/>
            <person name="Nilsson R."/>
            <person name="Nishiguchi S."/>
            <person name="Nishikawa S."/>
            <person name="Nori F."/>
            <person name="Ohara O."/>
            <person name="Okazaki Y."/>
            <person name="Orlando V."/>
            <person name="Pang K.C."/>
            <person name="Pavan W.J."/>
            <person name="Pavesi G."/>
            <person name="Pesole G."/>
            <person name="Petrovsky N."/>
            <person name="Piazza S."/>
            <person name="Reed J."/>
            <person name="Reid J.F."/>
            <person name="Ring B.Z."/>
            <person name="Ringwald M."/>
            <person name="Rost B."/>
            <person name="Ruan Y."/>
            <person name="Salzberg S.L."/>
            <person name="Sandelin A."/>
            <person name="Schneider C."/>
            <person name="Schoenbach C."/>
            <person name="Sekiguchi K."/>
            <person name="Semple C.A."/>
            <person name="Seno S."/>
            <person name="Sessa L."/>
            <person name="Sheng Y."/>
            <person name="Shibata Y."/>
            <person name="Shimada H."/>
            <person name="Shimada K."/>
            <person name="Silva D."/>
            <person name="Sinclair B."/>
            <person name="Sperling S."/>
            <person name="Stupka E."/>
            <person name="Sugiura K."/>
            <person name="Sultana R."/>
            <person name="Takenaka Y."/>
            <person name="Taki K."/>
            <person name="Tammoja K."/>
            <person name="Tan S.L."/>
            <person name="Tang S."/>
            <person name="Taylor M.S."/>
            <person name="Tegner J."/>
            <person name="Teichmann S.A."/>
            <person name="Ueda H.R."/>
            <person name="van Nimwegen E."/>
            <person name="Verardo R."/>
            <person name="Wei C.L."/>
            <person name="Yagi K."/>
            <person name="Yamanishi H."/>
            <person name="Zabarovsky E."/>
            <person name="Zhu S."/>
            <person name="Zimmer A."/>
            <person name="Hide W."/>
            <person name="Bult C."/>
            <person name="Grimmond S.M."/>
            <person name="Teasdale R.D."/>
            <person name="Liu E.T."/>
            <person name="Brusic V."/>
            <person name="Quackenbush J."/>
            <person name="Wahlestedt C."/>
            <person name="Mattick J.S."/>
            <person name="Hume D.A."/>
            <person name="Kai C."/>
            <person name="Sasaki D."/>
            <person name="Tomaru Y."/>
            <person name="Fukuda S."/>
            <person name="Kanamori-Katayama M."/>
            <person name="Suzuki M."/>
            <person name="Aoki J."/>
            <person name="Arakawa T."/>
            <person name="Iida J."/>
            <person name="Imamura K."/>
            <person name="Itoh M."/>
            <person name="Kato T."/>
            <person name="Kawaji H."/>
            <person name="Kawagashira N."/>
            <person name="Kawashima T."/>
            <person name="Kojima M."/>
            <person name="Kondo S."/>
            <person name="Konno H."/>
            <person name="Nakano K."/>
            <person name="Ninomiya N."/>
            <person name="Nishio T."/>
            <person name="Okada M."/>
            <person name="Plessy C."/>
            <person name="Shibata K."/>
            <person name="Shiraki T."/>
            <person name="Suzuki S."/>
            <person name="Tagami M."/>
            <person name="Waki K."/>
            <person name="Watahiki A."/>
            <person name="Okamura-Oho Y."/>
            <person name="Suzuki H."/>
            <person name="Kawai J."/>
            <person name="Hayashizaki Y."/>
        </authorList>
    </citation>
    <scope>NUCLEOTIDE SEQUENCE [LARGE SCALE MRNA]</scope>
    <source>
        <strain>C57BL/6J</strain>
        <tissue>Head</tissue>
        <tissue>Thymus</tissue>
    </source>
</reference>
<reference key="2">
    <citation type="journal article" date="2009" name="PLoS Biol.">
        <title>Lineage-specific biology revealed by a finished genome assembly of the mouse.</title>
        <authorList>
            <person name="Church D.M."/>
            <person name="Goodstadt L."/>
            <person name="Hillier L.W."/>
            <person name="Zody M.C."/>
            <person name="Goldstein S."/>
            <person name="She X."/>
            <person name="Bult C.J."/>
            <person name="Agarwala R."/>
            <person name="Cherry J.L."/>
            <person name="DiCuccio M."/>
            <person name="Hlavina W."/>
            <person name="Kapustin Y."/>
            <person name="Meric P."/>
            <person name="Maglott D."/>
            <person name="Birtle Z."/>
            <person name="Marques A.C."/>
            <person name="Graves T."/>
            <person name="Zhou S."/>
            <person name="Teague B."/>
            <person name="Potamousis K."/>
            <person name="Churas C."/>
            <person name="Place M."/>
            <person name="Herschleb J."/>
            <person name="Runnheim R."/>
            <person name="Forrest D."/>
            <person name="Amos-Landgraf J."/>
            <person name="Schwartz D.C."/>
            <person name="Cheng Z."/>
            <person name="Lindblad-Toh K."/>
            <person name="Eichler E.E."/>
            <person name="Ponting C.P."/>
        </authorList>
    </citation>
    <scope>NUCLEOTIDE SEQUENCE [LARGE SCALE GENOMIC DNA]</scope>
    <source>
        <strain>C57BL/6J</strain>
    </source>
</reference>
<gene>
    <name type="primary">Dcaf12l2</name>
    <name type="synonym">Wdr40c</name>
</gene>
<protein>
    <recommendedName>
        <fullName>DDB1- and CUL4-associated factor 12-like protein 2</fullName>
    </recommendedName>
    <alternativeName>
        <fullName>WD repeat-containing protein 40C</fullName>
    </alternativeName>
</protein>
<dbReference type="EMBL" id="AK037333">
    <property type="protein sequence ID" value="BAC29787.1"/>
    <property type="molecule type" value="mRNA"/>
</dbReference>
<dbReference type="EMBL" id="AK076436">
    <property type="protein sequence ID" value="BAC36344.1"/>
    <property type="molecule type" value="mRNA"/>
</dbReference>
<dbReference type="EMBL" id="AL670220">
    <property type="status" value="NOT_ANNOTATED_CDS"/>
    <property type="molecule type" value="Genomic_DNA"/>
</dbReference>
<dbReference type="CCDS" id="CCDS30100.1"/>
<dbReference type="RefSeq" id="NP_780748.1">
    <property type="nucleotide sequence ID" value="NM_175539.3"/>
</dbReference>
<dbReference type="SMR" id="Q8BGW4"/>
<dbReference type="FunCoup" id="Q8BGW4">
    <property type="interactions" value="129"/>
</dbReference>
<dbReference type="STRING" id="10090.ENSMUSP00000110709"/>
<dbReference type="iPTMnet" id="Q8BGW4"/>
<dbReference type="PhosphoSitePlus" id="Q8BGW4"/>
<dbReference type="PaxDb" id="10090-ENSMUSP00000110709"/>
<dbReference type="PeptideAtlas" id="Q8BGW4"/>
<dbReference type="ProteomicsDB" id="279878"/>
<dbReference type="DNASU" id="245403"/>
<dbReference type="Ensembl" id="ENSMUST00000115057.2">
    <property type="protein sequence ID" value="ENSMUSP00000110709.2"/>
    <property type="gene ID" value="ENSMUSG00000050926.6"/>
</dbReference>
<dbReference type="GeneID" id="245403"/>
<dbReference type="KEGG" id="mmu:245403"/>
<dbReference type="UCSC" id="uc009tbf.1">
    <property type="organism name" value="mouse"/>
</dbReference>
<dbReference type="AGR" id="MGI:2445178"/>
<dbReference type="CTD" id="340578"/>
<dbReference type="MGI" id="MGI:2445178">
    <property type="gene designation" value="Dcaf12l2"/>
</dbReference>
<dbReference type="VEuPathDB" id="HostDB:ENSMUSG00000050926"/>
<dbReference type="eggNOG" id="ENOG502QR7U">
    <property type="taxonomic scope" value="Eukaryota"/>
</dbReference>
<dbReference type="GeneTree" id="ENSGT00940000161322"/>
<dbReference type="HOGENOM" id="CLU_020124_1_0_1"/>
<dbReference type="InParanoid" id="Q8BGW4"/>
<dbReference type="OMA" id="PRYSHIR"/>
<dbReference type="OrthoDB" id="9610195at2759"/>
<dbReference type="PhylomeDB" id="Q8BGW4"/>
<dbReference type="TreeFam" id="TF323731"/>
<dbReference type="BioGRID-ORCS" id="245403">
    <property type="hits" value="3 hits in 80 CRISPR screens"/>
</dbReference>
<dbReference type="PRO" id="PR:Q8BGW4"/>
<dbReference type="Proteomes" id="UP000000589">
    <property type="component" value="Chromosome X"/>
</dbReference>
<dbReference type="RNAct" id="Q8BGW4">
    <property type="molecule type" value="protein"/>
</dbReference>
<dbReference type="Bgee" id="ENSMUSG00000050926">
    <property type="expression patterns" value="Expressed in mesodermal cell in embryo and 21 other cell types or tissues"/>
</dbReference>
<dbReference type="FunFam" id="2.130.10.10:FF:000497">
    <property type="entry name" value="DDB1 and CUL4-associated factor 12-like 1"/>
    <property type="match status" value="1"/>
</dbReference>
<dbReference type="FunFam" id="2.130.10.10:FF:000486">
    <property type="entry name" value="DDB1- and CUL4-associated factor 12-like protein 2"/>
    <property type="match status" value="1"/>
</dbReference>
<dbReference type="Gene3D" id="2.130.10.10">
    <property type="entry name" value="YVTN repeat-like/Quinoprotein amine dehydrogenase"/>
    <property type="match status" value="2"/>
</dbReference>
<dbReference type="InterPro" id="IPR056151">
    <property type="entry name" value="Beta-prop_DCAF12"/>
</dbReference>
<dbReference type="InterPro" id="IPR051191">
    <property type="entry name" value="DCAF12"/>
</dbReference>
<dbReference type="InterPro" id="IPR015943">
    <property type="entry name" value="WD40/YVTN_repeat-like_dom_sf"/>
</dbReference>
<dbReference type="InterPro" id="IPR036322">
    <property type="entry name" value="WD40_repeat_dom_sf"/>
</dbReference>
<dbReference type="InterPro" id="IPR001680">
    <property type="entry name" value="WD40_rpt"/>
</dbReference>
<dbReference type="PANTHER" id="PTHR19860:SF8">
    <property type="entry name" value="DDB1- AND CUL4-ASSOCIATED FACTOR 12-LIKE PROTEIN 2"/>
    <property type="match status" value="1"/>
</dbReference>
<dbReference type="PANTHER" id="PTHR19860">
    <property type="entry name" value="DDB1- AND CUL4-ASSOCIATED FACTOR 12-RELATED"/>
    <property type="match status" value="1"/>
</dbReference>
<dbReference type="Pfam" id="PF23760">
    <property type="entry name" value="Beta-prop_DCAF12"/>
    <property type="match status" value="1"/>
</dbReference>
<dbReference type="SMART" id="SM00320">
    <property type="entry name" value="WD40"/>
    <property type="match status" value="4"/>
</dbReference>
<dbReference type="SUPFAM" id="SSF50978">
    <property type="entry name" value="WD40 repeat-like"/>
    <property type="match status" value="1"/>
</dbReference>
<dbReference type="PROSITE" id="PS50082">
    <property type="entry name" value="WD_REPEATS_2"/>
    <property type="match status" value="1"/>
</dbReference>
<dbReference type="PROSITE" id="PS50294">
    <property type="entry name" value="WD_REPEATS_REGION"/>
    <property type="match status" value="1"/>
</dbReference>
<evidence type="ECO:0000256" key="1">
    <source>
        <dbReference type="SAM" id="MobiDB-lite"/>
    </source>
</evidence>
<evidence type="ECO:0000305" key="2"/>
<comment type="similarity">
    <text evidence="2">Belongs to the WD repeat DCAF12 family.</text>
</comment>
<feature type="chain" id="PRO_0000306851" description="DDB1- and CUL4-associated factor 12-like protein 2">
    <location>
        <begin position="1"/>
        <end position="469"/>
    </location>
</feature>
<feature type="repeat" description="WD 1">
    <location>
        <begin position="153"/>
        <end position="193"/>
    </location>
</feature>
<feature type="repeat" description="WD 2">
    <location>
        <begin position="198"/>
        <end position="236"/>
    </location>
</feature>
<feature type="repeat" description="WD 3">
    <location>
        <begin position="266"/>
        <end position="305"/>
    </location>
</feature>
<feature type="repeat" description="WD 4">
    <location>
        <begin position="354"/>
        <end position="391"/>
    </location>
</feature>
<feature type="region of interest" description="Disordered" evidence="1">
    <location>
        <begin position="1"/>
        <end position="34"/>
    </location>
</feature>
<accession>Q8BGW4</accession>
<proteinExistence type="evidence at transcript level"/>
<keyword id="KW-1185">Reference proteome</keyword>
<keyword id="KW-0677">Repeat</keyword>
<keyword id="KW-0853">WD repeat</keyword>
<organism>
    <name type="scientific">Mus musculus</name>
    <name type="common">Mouse</name>
    <dbReference type="NCBI Taxonomy" id="10090"/>
    <lineage>
        <taxon>Eukaryota</taxon>
        <taxon>Metazoa</taxon>
        <taxon>Chordata</taxon>
        <taxon>Craniata</taxon>
        <taxon>Vertebrata</taxon>
        <taxon>Euteleostomi</taxon>
        <taxon>Mammalia</taxon>
        <taxon>Eutheria</taxon>
        <taxon>Euarchontoglires</taxon>
        <taxon>Glires</taxon>
        <taxon>Rodentia</taxon>
        <taxon>Myomorpha</taxon>
        <taxon>Muroidea</taxon>
        <taxon>Muridae</taxon>
        <taxon>Murinae</taxon>
        <taxon>Mus</taxon>
        <taxon>Mus</taxon>
    </lineage>
</organism>